<accession>A6H1A3</accession>
<gene>
    <name evidence="1" type="primary">mraZ</name>
    <name type="ordered locus">FP2065</name>
</gene>
<dbReference type="EMBL" id="AM398681">
    <property type="protein sequence ID" value="CAL44127.1"/>
    <property type="molecule type" value="Genomic_DNA"/>
</dbReference>
<dbReference type="RefSeq" id="WP_011964164.1">
    <property type="nucleotide sequence ID" value="NC_009613.3"/>
</dbReference>
<dbReference type="RefSeq" id="YP_001296929.1">
    <property type="nucleotide sequence ID" value="NC_009613.3"/>
</dbReference>
<dbReference type="SMR" id="A6H1A3"/>
<dbReference type="STRING" id="402612.FP2065"/>
<dbReference type="EnsemblBacteria" id="CAL44127">
    <property type="protein sequence ID" value="CAL44127"/>
    <property type="gene ID" value="FP2065"/>
</dbReference>
<dbReference type="GeneID" id="66551751"/>
<dbReference type="KEGG" id="fps:FP2065"/>
<dbReference type="PATRIC" id="fig|402612.5.peg.2092"/>
<dbReference type="eggNOG" id="COG2001">
    <property type="taxonomic scope" value="Bacteria"/>
</dbReference>
<dbReference type="HOGENOM" id="CLU_107907_0_1_10"/>
<dbReference type="OrthoDB" id="9807753at2"/>
<dbReference type="Proteomes" id="UP000006394">
    <property type="component" value="Chromosome"/>
</dbReference>
<dbReference type="GO" id="GO:0005737">
    <property type="term" value="C:cytoplasm"/>
    <property type="evidence" value="ECO:0007669"/>
    <property type="project" value="UniProtKB-UniRule"/>
</dbReference>
<dbReference type="GO" id="GO:0009295">
    <property type="term" value="C:nucleoid"/>
    <property type="evidence" value="ECO:0007669"/>
    <property type="project" value="UniProtKB-SubCell"/>
</dbReference>
<dbReference type="GO" id="GO:0003700">
    <property type="term" value="F:DNA-binding transcription factor activity"/>
    <property type="evidence" value="ECO:0007669"/>
    <property type="project" value="UniProtKB-UniRule"/>
</dbReference>
<dbReference type="GO" id="GO:0000976">
    <property type="term" value="F:transcription cis-regulatory region binding"/>
    <property type="evidence" value="ECO:0007669"/>
    <property type="project" value="TreeGrafter"/>
</dbReference>
<dbReference type="GO" id="GO:2000143">
    <property type="term" value="P:negative regulation of DNA-templated transcription initiation"/>
    <property type="evidence" value="ECO:0007669"/>
    <property type="project" value="TreeGrafter"/>
</dbReference>
<dbReference type="CDD" id="cd16321">
    <property type="entry name" value="MraZ_C"/>
    <property type="match status" value="1"/>
</dbReference>
<dbReference type="CDD" id="cd16320">
    <property type="entry name" value="MraZ_N"/>
    <property type="match status" value="1"/>
</dbReference>
<dbReference type="Gene3D" id="3.40.1550.20">
    <property type="entry name" value="Transcriptional regulator MraZ domain"/>
    <property type="match status" value="1"/>
</dbReference>
<dbReference type="HAMAP" id="MF_01008">
    <property type="entry name" value="MraZ"/>
    <property type="match status" value="1"/>
</dbReference>
<dbReference type="InterPro" id="IPR003444">
    <property type="entry name" value="MraZ"/>
</dbReference>
<dbReference type="InterPro" id="IPR035644">
    <property type="entry name" value="MraZ_C"/>
</dbReference>
<dbReference type="InterPro" id="IPR020603">
    <property type="entry name" value="MraZ_dom"/>
</dbReference>
<dbReference type="InterPro" id="IPR035642">
    <property type="entry name" value="MraZ_N"/>
</dbReference>
<dbReference type="InterPro" id="IPR038619">
    <property type="entry name" value="MraZ_sf"/>
</dbReference>
<dbReference type="InterPro" id="IPR007159">
    <property type="entry name" value="SpoVT-AbrB_dom"/>
</dbReference>
<dbReference type="InterPro" id="IPR037914">
    <property type="entry name" value="SpoVT-AbrB_sf"/>
</dbReference>
<dbReference type="NCBIfam" id="TIGR00242">
    <property type="entry name" value="division/cell wall cluster transcriptional repressor MraZ"/>
    <property type="match status" value="1"/>
</dbReference>
<dbReference type="PANTHER" id="PTHR34701">
    <property type="entry name" value="TRANSCRIPTIONAL REGULATOR MRAZ"/>
    <property type="match status" value="1"/>
</dbReference>
<dbReference type="PANTHER" id="PTHR34701:SF1">
    <property type="entry name" value="TRANSCRIPTIONAL REGULATOR MRAZ"/>
    <property type="match status" value="1"/>
</dbReference>
<dbReference type="Pfam" id="PF02381">
    <property type="entry name" value="MraZ"/>
    <property type="match status" value="2"/>
</dbReference>
<dbReference type="SUPFAM" id="SSF89447">
    <property type="entry name" value="AbrB/MazE/MraZ-like"/>
    <property type="match status" value="1"/>
</dbReference>
<dbReference type="PROSITE" id="PS51740">
    <property type="entry name" value="SPOVT_ABRB"/>
    <property type="match status" value="2"/>
</dbReference>
<reference key="1">
    <citation type="journal article" date="2007" name="Nat. Biotechnol.">
        <title>Complete genome sequence of the fish pathogen Flavobacterium psychrophilum.</title>
        <authorList>
            <person name="Duchaud E."/>
            <person name="Boussaha M."/>
            <person name="Loux V."/>
            <person name="Bernardet J.-F."/>
            <person name="Michel C."/>
            <person name="Kerouault B."/>
            <person name="Mondot S."/>
            <person name="Nicolas P."/>
            <person name="Bossy R."/>
            <person name="Caron C."/>
            <person name="Bessieres P."/>
            <person name="Gibrat J.-F."/>
            <person name="Claverol S."/>
            <person name="Dumetz F."/>
            <person name="Le Henaff M."/>
            <person name="Benmansour A."/>
        </authorList>
    </citation>
    <scope>NUCLEOTIDE SEQUENCE [LARGE SCALE GENOMIC DNA]</scope>
    <source>
        <strain>ATCC 49511 / DSM 21280 / CIP 103535 / JIP02/86</strain>
    </source>
</reference>
<evidence type="ECO:0000255" key="1">
    <source>
        <dbReference type="HAMAP-Rule" id="MF_01008"/>
    </source>
</evidence>
<evidence type="ECO:0000255" key="2">
    <source>
        <dbReference type="PROSITE-ProRule" id="PRU01076"/>
    </source>
</evidence>
<proteinExistence type="inferred from homology"/>
<organism>
    <name type="scientific">Flavobacterium psychrophilum (strain ATCC 49511 / DSM 21280 / CIP 103535 / JIP02/86)</name>
    <dbReference type="NCBI Taxonomy" id="402612"/>
    <lineage>
        <taxon>Bacteria</taxon>
        <taxon>Pseudomonadati</taxon>
        <taxon>Bacteroidota</taxon>
        <taxon>Flavobacteriia</taxon>
        <taxon>Flavobacteriales</taxon>
        <taxon>Flavobacteriaceae</taxon>
        <taxon>Flavobacterium</taxon>
    </lineage>
</organism>
<feature type="chain" id="PRO_1000062875" description="Transcriptional regulator MraZ">
    <location>
        <begin position="1"/>
        <end position="157"/>
    </location>
</feature>
<feature type="domain" description="SpoVT-AbrB 1" evidence="2">
    <location>
        <begin position="7"/>
        <end position="54"/>
    </location>
</feature>
<feature type="domain" description="SpoVT-AbrB 2" evidence="2">
    <location>
        <begin position="83"/>
        <end position="126"/>
    </location>
</feature>
<protein>
    <recommendedName>
        <fullName>Transcriptional regulator MraZ</fullName>
    </recommendedName>
</protein>
<name>MRAZ_FLAPJ</name>
<keyword id="KW-0963">Cytoplasm</keyword>
<keyword id="KW-0238">DNA-binding</keyword>
<keyword id="KW-1185">Reference proteome</keyword>
<keyword id="KW-0677">Repeat</keyword>
<keyword id="KW-0804">Transcription</keyword>
<keyword id="KW-0805">Transcription regulation</keyword>
<comment type="subunit">
    <text evidence="1">Forms oligomers.</text>
</comment>
<comment type="subcellular location">
    <subcellularLocation>
        <location evidence="1">Cytoplasm</location>
        <location evidence="1">Nucleoid</location>
    </subcellularLocation>
</comment>
<comment type="similarity">
    <text evidence="1">Belongs to the MraZ family.</text>
</comment>
<sequence length="157" mass="17942">MNTIVGTYECKVDSKGRLMMPNPLKKQLNVSLQEGFVLKRSVFQQCLELYPMKEWDLMMQKINKLNRFVKKNNDFIRRFTAGVRIIEIDATGRLLIPKDLAVFASVTKDIVLSSAVNIIEIWDKDLYEKAIDDSVGDFADLAEEVMGNVNDDEYGIS</sequence>